<sequence>MRKLVVGSRRSKLALTQSQQFIDKLKAVEPNLEIEIKEIVTKGDRIVDKQLSKVGGKGLFVKEIQHELFEKNIDMAIHSLKDVPSVIPEGLTLGCIPDRELPFDAYISKTHTPLSQLPEGSIIGTSSLRRGAQILSKYPNLEIKWIRGNIDTRLEKLQTEDYDAIILAAAGLRRMGWSDDIVTSYLDRDTLLPAIGQGALGIECRSDDEELLTLLSKVHNDEVAKCVTAERTFLAEMDGSCQVPIAGYATISDQNEIEFTGLIMTPDGKERFEYTMNGTDPVELGKTVSNKLKEQGAYEIIKRLNEQH</sequence>
<name>HEM3_STAAC</name>
<protein>
    <recommendedName>
        <fullName evidence="1">Porphobilinogen deaminase</fullName>
        <shortName evidence="1">PBG</shortName>
        <ecNumber evidence="1">2.5.1.61</ecNumber>
    </recommendedName>
    <alternativeName>
        <fullName evidence="1">Hydroxymethylbilane synthase</fullName>
        <shortName evidence="1">HMBS</shortName>
    </alternativeName>
    <alternativeName>
        <fullName evidence="1">Pre-uroporphyrinogen synthase</fullName>
    </alternativeName>
</protein>
<evidence type="ECO:0000255" key="1">
    <source>
        <dbReference type="HAMAP-Rule" id="MF_00260"/>
    </source>
</evidence>
<reference key="1">
    <citation type="journal article" date="2005" name="J. Bacteriol.">
        <title>Insights on evolution of virulence and resistance from the complete genome analysis of an early methicillin-resistant Staphylococcus aureus strain and a biofilm-producing methicillin-resistant Staphylococcus epidermidis strain.</title>
        <authorList>
            <person name="Gill S.R."/>
            <person name="Fouts D.E."/>
            <person name="Archer G.L."/>
            <person name="Mongodin E.F."/>
            <person name="DeBoy R.T."/>
            <person name="Ravel J."/>
            <person name="Paulsen I.T."/>
            <person name="Kolonay J.F."/>
            <person name="Brinkac L.M."/>
            <person name="Beanan M.J."/>
            <person name="Dodson R.J."/>
            <person name="Daugherty S.C."/>
            <person name="Madupu R."/>
            <person name="Angiuoli S.V."/>
            <person name="Durkin A.S."/>
            <person name="Haft D.H."/>
            <person name="Vamathevan J.J."/>
            <person name="Khouri H."/>
            <person name="Utterback T.R."/>
            <person name="Lee C."/>
            <person name="Dimitrov G."/>
            <person name="Jiang L."/>
            <person name="Qin H."/>
            <person name="Weidman J."/>
            <person name="Tran K."/>
            <person name="Kang K.H."/>
            <person name="Hance I.R."/>
            <person name="Nelson K.E."/>
            <person name="Fraser C.M."/>
        </authorList>
    </citation>
    <scope>NUCLEOTIDE SEQUENCE [LARGE SCALE GENOMIC DNA]</scope>
    <source>
        <strain>COL</strain>
    </source>
</reference>
<keyword id="KW-0627">Porphyrin biosynthesis</keyword>
<keyword id="KW-0808">Transferase</keyword>
<comment type="function">
    <text evidence="1">Tetrapolymerization of the monopyrrole PBG into the hydroxymethylbilane pre-uroporphyrinogen in several discrete steps.</text>
</comment>
<comment type="catalytic activity">
    <reaction evidence="1">
        <text>4 porphobilinogen + H2O = hydroxymethylbilane + 4 NH4(+)</text>
        <dbReference type="Rhea" id="RHEA:13185"/>
        <dbReference type="ChEBI" id="CHEBI:15377"/>
        <dbReference type="ChEBI" id="CHEBI:28938"/>
        <dbReference type="ChEBI" id="CHEBI:57845"/>
        <dbReference type="ChEBI" id="CHEBI:58126"/>
        <dbReference type="EC" id="2.5.1.61"/>
    </reaction>
</comment>
<comment type="cofactor">
    <cofactor evidence="1">
        <name>dipyrromethane</name>
        <dbReference type="ChEBI" id="CHEBI:60342"/>
    </cofactor>
    <text evidence="1">Binds 1 dipyrromethane group covalently.</text>
</comment>
<comment type="pathway">
    <text evidence="1">Porphyrin-containing compound metabolism; protoporphyrin-IX biosynthesis; coproporphyrinogen-III from 5-aminolevulinate: step 2/4.</text>
</comment>
<comment type="subunit">
    <text evidence="1">Monomer.</text>
</comment>
<comment type="miscellaneous">
    <text evidence="1">The porphobilinogen subunits are added to the dipyrromethane group.</text>
</comment>
<comment type="similarity">
    <text evidence="1">Belongs to the HMBS family.</text>
</comment>
<organism>
    <name type="scientific">Staphylococcus aureus (strain COL)</name>
    <dbReference type="NCBI Taxonomy" id="93062"/>
    <lineage>
        <taxon>Bacteria</taxon>
        <taxon>Bacillati</taxon>
        <taxon>Bacillota</taxon>
        <taxon>Bacilli</taxon>
        <taxon>Bacillales</taxon>
        <taxon>Staphylococcaceae</taxon>
        <taxon>Staphylococcus</taxon>
    </lineage>
</organism>
<accession>Q5HFA2</accession>
<feature type="chain" id="PRO_0000142988" description="Porphobilinogen deaminase">
    <location>
        <begin position="1"/>
        <end position="308"/>
    </location>
</feature>
<feature type="modified residue" description="S-(dipyrrolylmethanemethyl)cysteine" evidence="1">
    <location>
        <position position="241"/>
    </location>
</feature>
<gene>
    <name evidence="1" type="primary">hemC</name>
    <name type="ordered locus">SACOL1717</name>
</gene>
<dbReference type="EC" id="2.5.1.61" evidence="1"/>
<dbReference type="EMBL" id="CP000046">
    <property type="protein sequence ID" value="AAW36822.1"/>
    <property type="molecule type" value="Genomic_DNA"/>
</dbReference>
<dbReference type="RefSeq" id="WP_001230228.1">
    <property type="nucleotide sequence ID" value="NZ_JBGOFO010000003.1"/>
</dbReference>
<dbReference type="SMR" id="Q5HFA2"/>
<dbReference type="KEGG" id="sac:SACOL1717"/>
<dbReference type="HOGENOM" id="CLU_019704_0_2_9"/>
<dbReference type="UniPathway" id="UPA00251">
    <property type="reaction ID" value="UER00319"/>
</dbReference>
<dbReference type="Proteomes" id="UP000000530">
    <property type="component" value="Chromosome"/>
</dbReference>
<dbReference type="GO" id="GO:0005737">
    <property type="term" value="C:cytoplasm"/>
    <property type="evidence" value="ECO:0007669"/>
    <property type="project" value="TreeGrafter"/>
</dbReference>
<dbReference type="GO" id="GO:0004418">
    <property type="term" value="F:hydroxymethylbilane synthase activity"/>
    <property type="evidence" value="ECO:0007669"/>
    <property type="project" value="UniProtKB-UniRule"/>
</dbReference>
<dbReference type="GO" id="GO:0006782">
    <property type="term" value="P:protoporphyrinogen IX biosynthetic process"/>
    <property type="evidence" value="ECO:0007669"/>
    <property type="project" value="UniProtKB-UniRule"/>
</dbReference>
<dbReference type="CDD" id="cd13646">
    <property type="entry name" value="PBP2_EcHMBS_like"/>
    <property type="match status" value="1"/>
</dbReference>
<dbReference type="FunFam" id="3.30.160.40:FF:000001">
    <property type="entry name" value="Porphobilinogen deaminase"/>
    <property type="match status" value="1"/>
</dbReference>
<dbReference type="FunFam" id="3.40.190.10:FF:000004">
    <property type="entry name" value="Porphobilinogen deaminase"/>
    <property type="match status" value="1"/>
</dbReference>
<dbReference type="FunFam" id="3.40.190.10:FF:000005">
    <property type="entry name" value="Porphobilinogen deaminase"/>
    <property type="match status" value="1"/>
</dbReference>
<dbReference type="Gene3D" id="3.40.190.10">
    <property type="entry name" value="Periplasmic binding protein-like II"/>
    <property type="match status" value="2"/>
</dbReference>
<dbReference type="Gene3D" id="3.30.160.40">
    <property type="entry name" value="Porphobilinogen deaminase, C-terminal domain"/>
    <property type="match status" value="1"/>
</dbReference>
<dbReference type="HAMAP" id="MF_00260">
    <property type="entry name" value="Porphobil_deam"/>
    <property type="match status" value="1"/>
</dbReference>
<dbReference type="InterPro" id="IPR000860">
    <property type="entry name" value="HemC"/>
</dbReference>
<dbReference type="InterPro" id="IPR022419">
    <property type="entry name" value="Porphobilin_deaminase_cofac_BS"/>
</dbReference>
<dbReference type="InterPro" id="IPR022417">
    <property type="entry name" value="Porphobilin_deaminase_N"/>
</dbReference>
<dbReference type="InterPro" id="IPR022418">
    <property type="entry name" value="Porphobilinogen_deaminase_C"/>
</dbReference>
<dbReference type="InterPro" id="IPR036803">
    <property type="entry name" value="Porphobilinogen_deaminase_C_sf"/>
</dbReference>
<dbReference type="NCBIfam" id="TIGR00212">
    <property type="entry name" value="hemC"/>
    <property type="match status" value="1"/>
</dbReference>
<dbReference type="PANTHER" id="PTHR11557">
    <property type="entry name" value="PORPHOBILINOGEN DEAMINASE"/>
    <property type="match status" value="1"/>
</dbReference>
<dbReference type="PANTHER" id="PTHR11557:SF0">
    <property type="entry name" value="PORPHOBILINOGEN DEAMINASE"/>
    <property type="match status" value="1"/>
</dbReference>
<dbReference type="Pfam" id="PF01379">
    <property type="entry name" value="Porphobil_deam"/>
    <property type="match status" value="1"/>
</dbReference>
<dbReference type="Pfam" id="PF03900">
    <property type="entry name" value="Porphobil_deamC"/>
    <property type="match status" value="1"/>
</dbReference>
<dbReference type="PIRSF" id="PIRSF001438">
    <property type="entry name" value="4pyrrol_synth_OHMeBilane_synth"/>
    <property type="match status" value="1"/>
</dbReference>
<dbReference type="PRINTS" id="PR00151">
    <property type="entry name" value="PORPHBDMNASE"/>
</dbReference>
<dbReference type="SUPFAM" id="SSF53850">
    <property type="entry name" value="Periplasmic binding protein-like II"/>
    <property type="match status" value="1"/>
</dbReference>
<dbReference type="SUPFAM" id="SSF54782">
    <property type="entry name" value="Porphobilinogen deaminase (hydroxymethylbilane synthase), C-terminal domain"/>
    <property type="match status" value="1"/>
</dbReference>
<dbReference type="PROSITE" id="PS00533">
    <property type="entry name" value="PORPHOBILINOGEN_DEAM"/>
    <property type="match status" value="1"/>
</dbReference>
<proteinExistence type="inferred from homology"/>